<comment type="function">
    <text evidence="1">Contributes to the efficiency of the cell division process by stabilizing the polymeric form of the cell division protein FtsZ. Acts by promoting interactions between FtsZ protofilaments and suppressing the GTPase activity of FtsZ.</text>
</comment>
<comment type="subunit">
    <text evidence="1">Interacts directly with FtsZ.</text>
</comment>
<comment type="subcellular location">
    <subcellularLocation>
        <location evidence="1">Cytoplasm</location>
    </subcellularLocation>
</comment>
<comment type="similarity">
    <text evidence="1">Belongs to the ZapC family.</text>
</comment>
<evidence type="ECO:0000255" key="1">
    <source>
        <dbReference type="HAMAP-Rule" id="MF_00906"/>
    </source>
</evidence>
<name>ZAPC_VIBVU</name>
<protein>
    <recommendedName>
        <fullName evidence="1">Cell division protein ZapC</fullName>
    </recommendedName>
</protein>
<proteinExistence type="inferred from homology"/>
<reference key="1">
    <citation type="submission" date="2002-12" db="EMBL/GenBank/DDBJ databases">
        <title>Complete genome sequence of Vibrio vulnificus CMCP6.</title>
        <authorList>
            <person name="Rhee J.H."/>
            <person name="Kim S.Y."/>
            <person name="Chung S.S."/>
            <person name="Kim J.J."/>
            <person name="Moon Y.H."/>
            <person name="Jeong H."/>
            <person name="Choy H.E."/>
        </authorList>
    </citation>
    <scope>NUCLEOTIDE SEQUENCE [LARGE SCALE GENOMIC DNA]</scope>
    <source>
        <strain>CMCP6</strain>
    </source>
</reference>
<feature type="chain" id="PRO_0000413794" description="Cell division protein ZapC">
    <location>
        <begin position="1"/>
        <end position="180"/>
    </location>
</feature>
<sequence length="180" mass="20316">MLKPSDKWSWYFDKPSGRLMLDLGDRYLFQTNLSDKLLVDCAFSYNDFTVDDASAFQTFKECLSSLDLSEYRRDELTLYCVAAKRFHKPVQPKSWFFHSTGSDYQPSEGELVQLQNGLNQGLFIVLEAGDNASLVSCVELEGFMLSGSKSLSYGEAIKVMHDRMSTAARMNTLMPMALVG</sequence>
<accession>Q8D9G6</accession>
<keyword id="KW-0131">Cell cycle</keyword>
<keyword id="KW-0132">Cell division</keyword>
<keyword id="KW-0963">Cytoplasm</keyword>
<keyword id="KW-0717">Septation</keyword>
<organism>
    <name type="scientific">Vibrio vulnificus (strain CMCP6)</name>
    <dbReference type="NCBI Taxonomy" id="216895"/>
    <lineage>
        <taxon>Bacteria</taxon>
        <taxon>Pseudomonadati</taxon>
        <taxon>Pseudomonadota</taxon>
        <taxon>Gammaproteobacteria</taxon>
        <taxon>Vibrionales</taxon>
        <taxon>Vibrionaceae</taxon>
        <taxon>Vibrio</taxon>
    </lineage>
</organism>
<dbReference type="EMBL" id="AE016795">
    <property type="protein sequence ID" value="AAO10984.1"/>
    <property type="molecule type" value="Genomic_DNA"/>
</dbReference>
<dbReference type="RefSeq" id="WP_011080480.1">
    <property type="nucleotide sequence ID" value="NC_004459.3"/>
</dbReference>
<dbReference type="SMR" id="Q8D9G6"/>
<dbReference type="KEGG" id="vvu:VV1_2636"/>
<dbReference type="HOGENOM" id="CLU_128248_0_0_6"/>
<dbReference type="Proteomes" id="UP000002275">
    <property type="component" value="Chromosome 1"/>
</dbReference>
<dbReference type="GO" id="GO:0005737">
    <property type="term" value="C:cytoplasm"/>
    <property type="evidence" value="ECO:0007669"/>
    <property type="project" value="UniProtKB-SubCell"/>
</dbReference>
<dbReference type="GO" id="GO:0000917">
    <property type="term" value="P:division septum assembly"/>
    <property type="evidence" value="ECO:0007669"/>
    <property type="project" value="UniProtKB-KW"/>
</dbReference>
<dbReference type="GO" id="GO:0043093">
    <property type="term" value="P:FtsZ-dependent cytokinesis"/>
    <property type="evidence" value="ECO:0007669"/>
    <property type="project" value="UniProtKB-UniRule"/>
</dbReference>
<dbReference type="HAMAP" id="MF_00906">
    <property type="entry name" value="ZapC"/>
    <property type="match status" value="1"/>
</dbReference>
<dbReference type="InterPro" id="IPR009809">
    <property type="entry name" value="ZapC"/>
</dbReference>
<dbReference type="InterPro" id="IPR048372">
    <property type="entry name" value="ZapC_C"/>
</dbReference>
<dbReference type="InterPro" id="IPR048373">
    <property type="entry name" value="ZapC_N"/>
</dbReference>
<dbReference type="Pfam" id="PF07126">
    <property type="entry name" value="ZapC_C"/>
    <property type="match status" value="1"/>
</dbReference>
<dbReference type="Pfam" id="PF21083">
    <property type="entry name" value="ZapC_N"/>
    <property type="match status" value="1"/>
</dbReference>
<dbReference type="PIRSF" id="PIRSF010252">
    <property type="entry name" value="ZapC"/>
    <property type="match status" value="1"/>
</dbReference>
<gene>
    <name evidence="1" type="primary">zapC</name>
    <name type="ordered locus">VV1_2636</name>
</gene>